<keyword id="KW-0125">Carotenoid biosynthesis</keyword>
<keyword id="KW-0274">FAD</keyword>
<keyword id="KW-0285">Flavoprotein</keyword>
<keyword id="KW-0560">Oxidoreductase</keyword>
<keyword id="KW-0843">Virulence</keyword>
<proteinExistence type="inferred from homology"/>
<name>CRTN_STAAC</name>
<evidence type="ECO:0000250" key="1">
    <source>
        <dbReference type="UniProtKB" id="O07855"/>
    </source>
</evidence>
<evidence type="ECO:0000255" key="2"/>
<evidence type="ECO:0000305" key="3"/>
<sequence>MKIAVIGAGVTGLAAAARIASQGHEVTIFEKNNNVGGCMNQLKKDGFTFDMGPTIVMMPDVYKDVFTACGKNYEDYIELRQLRYIYDVYFDHDDRITVPTDLAELQQMLESIEPGSTHGFMSFLTDVYKKYEIARRYFLERTYRKPSDFYNMTSLVQGAKLKTLNHADQLIEHYIDNEKIQKLLAFQTLYIGIDPKRGPSLYSIIPMIEMMFGVHFIKGGMYGMAQGLAQLNKDLGVNIELNAEIEQIIIDPKFKRADAIKVNGDIRKFDKILCTADFPSVAESLMPDFAPIKKYPPHKIADLDYSCSAFLMYIGIDIDVTDQVRLHNVIFSDDFRGNIEEIFEGRLSYDPSIYVYVPAVADKSLAPEGKTGIYVLMPTPELKTGSGIDWSDEALTQQIKEIIYRKLATIEVFEDIKSHIVSETIFTPNDFEQTYHAKFGSAFGLMPTLAQSNYYRPQNVSRDYKDLYFAGASTHPGAGVPIVLTSAKITVDEMIKDIERGV</sequence>
<comment type="function">
    <text evidence="1">Involved in the biosynthesis of the yellow-orange carotenoid staphyloxanthin, which plays a role in the virulence via its protective function against oxidative stress. Catalyzes three successive dehydrogenation reactions that lead to the introduction of three double bonds into 4,4'-diapophytoene (dehydrosqualene), with 4,4'-diapophytofluene and 4,4'-diapo-zeta-carotene as intermediates, and 4,4'-diaponeurosporene (the major deep-yellow pigment in staphylococci strains) as the end product.</text>
</comment>
<comment type="catalytic activity">
    <reaction evidence="1">
        <text>15-cis-4,4'-diapophytoene + 3 FAD + 3 H(+) = all-trans-4,4'-diaponeurosporene + 3 FADH2</text>
        <dbReference type="Rhea" id="RHEA:42800"/>
        <dbReference type="ChEBI" id="CHEBI:15378"/>
        <dbReference type="ChEBI" id="CHEBI:57692"/>
        <dbReference type="ChEBI" id="CHEBI:58307"/>
        <dbReference type="ChEBI" id="CHEBI:62738"/>
        <dbReference type="ChEBI" id="CHEBI:62743"/>
    </reaction>
</comment>
<comment type="pathway">
    <text evidence="1">Carotenoid biosynthesis; staphyloxanthin biosynthesis; staphyloxanthin from farnesyl diphosphate: step 2/5.</text>
</comment>
<comment type="similarity">
    <text evidence="3">Belongs to the carotenoid/retinoid oxidoreductase family. CrtN subfamily.</text>
</comment>
<organism>
    <name type="scientific">Staphylococcus aureus (strain COL)</name>
    <dbReference type="NCBI Taxonomy" id="93062"/>
    <lineage>
        <taxon>Bacteria</taxon>
        <taxon>Bacillati</taxon>
        <taxon>Bacillota</taxon>
        <taxon>Bacilli</taxon>
        <taxon>Bacillales</taxon>
        <taxon>Staphylococcaceae</taxon>
        <taxon>Staphylococcus</taxon>
    </lineage>
</organism>
<dbReference type="EC" id="1.3.8.-" evidence="1"/>
<dbReference type="EMBL" id="CP000046">
    <property type="protein sequence ID" value="AAW38578.1"/>
    <property type="molecule type" value="Genomic_DNA"/>
</dbReference>
<dbReference type="RefSeq" id="WP_000686163.1">
    <property type="nucleotide sequence ID" value="NC_002951.2"/>
</dbReference>
<dbReference type="SMR" id="Q5HCY9"/>
<dbReference type="KEGG" id="sac:SACOL2576"/>
<dbReference type="HOGENOM" id="CLU_019722_2_1_9"/>
<dbReference type="UniPathway" id="UPA00029">
    <property type="reaction ID" value="UER00557"/>
</dbReference>
<dbReference type="Proteomes" id="UP000000530">
    <property type="component" value="Chromosome"/>
</dbReference>
<dbReference type="GO" id="GO:0102223">
    <property type="term" value="F:4,4'-diapophytoene desaturase (4,4'-diaponeurosporene-forming)"/>
    <property type="evidence" value="ECO:0007669"/>
    <property type="project" value="RHEA"/>
</dbReference>
<dbReference type="GO" id="GO:0016117">
    <property type="term" value="P:carotenoid biosynthetic process"/>
    <property type="evidence" value="ECO:0007669"/>
    <property type="project" value="UniProtKB-KW"/>
</dbReference>
<dbReference type="Gene3D" id="3.50.50.60">
    <property type="entry name" value="FAD/NAD(P)-binding domain"/>
    <property type="match status" value="2"/>
</dbReference>
<dbReference type="InterPro" id="IPR002937">
    <property type="entry name" value="Amino_oxidase"/>
</dbReference>
<dbReference type="InterPro" id="IPR014105">
    <property type="entry name" value="Carotenoid/retinoid_OxRdtase"/>
</dbReference>
<dbReference type="InterPro" id="IPR036188">
    <property type="entry name" value="FAD/NAD-bd_sf"/>
</dbReference>
<dbReference type="NCBIfam" id="TIGR02734">
    <property type="entry name" value="crtI_fam"/>
    <property type="match status" value="1"/>
</dbReference>
<dbReference type="PANTHER" id="PTHR43734">
    <property type="entry name" value="PHYTOENE DESATURASE"/>
    <property type="match status" value="1"/>
</dbReference>
<dbReference type="PANTHER" id="PTHR43734:SF1">
    <property type="entry name" value="PHYTOENE DESATURASE"/>
    <property type="match status" value="1"/>
</dbReference>
<dbReference type="Pfam" id="PF01593">
    <property type="entry name" value="Amino_oxidase"/>
    <property type="match status" value="1"/>
</dbReference>
<dbReference type="PRINTS" id="PR00419">
    <property type="entry name" value="ADXRDTASE"/>
</dbReference>
<dbReference type="SUPFAM" id="SSF51905">
    <property type="entry name" value="FAD/NAD(P)-binding domain"/>
    <property type="match status" value="1"/>
</dbReference>
<reference key="1">
    <citation type="journal article" date="2005" name="J. Bacteriol.">
        <title>Insights on evolution of virulence and resistance from the complete genome analysis of an early methicillin-resistant Staphylococcus aureus strain and a biofilm-producing methicillin-resistant Staphylococcus epidermidis strain.</title>
        <authorList>
            <person name="Gill S.R."/>
            <person name="Fouts D.E."/>
            <person name="Archer G.L."/>
            <person name="Mongodin E.F."/>
            <person name="DeBoy R.T."/>
            <person name="Ravel J."/>
            <person name="Paulsen I.T."/>
            <person name="Kolonay J.F."/>
            <person name="Brinkac L.M."/>
            <person name="Beanan M.J."/>
            <person name="Dodson R.J."/>
            <person name="Daugherty S.C."/>
            <person name="Madupu R."/>
            <person name="Angiuoli S.V."/>
            <person name="Durkin A.S."/>
            <person name="Haft D.H."/>
            <person name="Vamathevan J.J."/>
            <person name="Khouri H."/>
            <person name="Utterback T.R."/>
            <person name="Lee C."/>
            <person name="Dimitrov G."/>
            <person name="Jiang L."/>
            <person name="Qin H."/>
            <person name="Weidman J."/>
            <person name="Tran K."/>
            <person name="Kang K.H."/>
            <person name="Hance I.R."/>
            <person name="Nelson K.E."/>
            <person name="Fraser C.M."/>
        </authorList>
    </citation>
    <scope>NUCLEOTIDE SEQUENCE [LARGE SCALE GENOMIC DNA]</scope>
    <source>
        <strain>COL</strain>
    </source>
</reference>
<accession>Q5HCY9</accession>
<feature type="chain" id="PRO_0000272193" description="4,4'-diapophytoene desaturase (4,4'-diaponeurosporene-forming)">
    <location>
        <begin position="1"/>
        <end position="502"/>
    </location>
</feature>
<feature type="binding site" evidence="2">
    <location>
        <begin position="5"/>
        <end position="17"/>
    </location>
    <ligand>
        <name>FAD</name>
        <dbReference type="ChEBI" id="CHEBI:57692"/>
    </ligand>
</feature>
<gene>
    <name evidence="1" type="primary">crtN</name>
    <name type="ordered locus">SACOL2576</name>
</gene>
<protein>
    <recommendedName>
        <fullName evidence="1">4,4'-diapophytoene desaturase (4,4'-diaponeurosporene-forming)</fullName>
        <ecNumber evidence="1">1.3.8.-</ecNumber>
    </recommendedName>
    <alternativeName>
        <fullName evidence="1">Dehydrosqualene desaturase</fullName>
    </alternativeName>
</protein>